<feature type="chain" id="PRO_1000070282" description="Ribonuclease Z">
    <location>
        <begin position="1"/>
        <end position="300"/>
    </location>
</feature>
<feature type="active site" description="Proton acceptor" evidence="1">
    <location>
        <position position="67"/>
    </location>
</feature>
<feature type="binding site" evidence="1">
    <location>
        <position position="63"/>
    </location>
    <ligand>
        <name>Zn(2+)</name>
        <dbReference type="ChEBI" id="CHEBI:29105"/>
        <label>1</label>
        <note>catalytic</note>
    </ligand>
</feature>
<feature type="binding site" evidence="1">
    <location>
        <position position="65"/>
    </location>
    <ligand>
        <name>Zn(2+)</name>
        <dbReference type="ChEBI" id="CHEBI:29105"/>
        <label>1</label>
        <note>catalytic</note>
    </ligand>
</feature>
<feature type="binding site" evidence="1">
    <location>
        <position position="67"/>
    </location>
    <ligand>
        <name>Zn(2+)</name>
        <dbReference type="ChEBI" id="CHEBI:29105"/>
        <label>2</label>
        <note>catalytic</note>
    </ligand>
</feature>
<feature type="binding site" evidence="1">
    <location>
        <position position="68"/>
    </location>
    <ligand>
        <name>Zn(2+)</name>
        <dbReference type="ChEBI" id="CHEBI:29105"/>
        <label>2</label>
        <note>catalytic</note>
    </ligand>
</feature>
<feature type="binding site" evidence="1">
    <location>
        <position position="140"/>
    </location>
    <ligand>
        <name>Zn(2+)</name>
        <dbReference type="ChEBI" id="CHEBI:29105"/>
        <label>1</label>
        <note>catalytic</note>
    </ligand>
</feature>
<feature type="binding site" evidence="1">
    <location>
        <position position="207"/>
    </location>
    <ligand>
        <name>Zn(2+)</name>
        <dbReference type="ChEBI" id="CHEBI:29105"/>
        <label>1</label>
        <note>catalytic</note>
    </ligand>
</feature>
<feature type="binding site" evidence="1">
    <location>
        <position position="207"/>
    </location>
    <ligand>
        <name>Zn(2+)</name>
        <dbReference type="ChEBI" id="CHEBI:29105"/>
        <label>2</label>
        <note>catalytic</note>
    </ligand>
</feature>
<feature type="binding site" evidence="1">
    <location>
        <position position="265"/>
    </location>
    <ligand>
        <name>Zn(2+)</name>
        <dbReference type="ChEBI" id="CHEBI:29105"/>
        <label>2</label>
        <note>catalytic</note>
    </ligand>
</feature>
<keyword id="KW-0255">Endonuclease</keyword>
<keyword id="KW-0378">Hydrolase</keyword>
<keyword id="KW-0479">Metal-binding</keyword>
<keyword id="KW-0540">Nuclease</keyword>
<keyword id="KW-1185">Reference proteome</keyword>
<keyword id="KW-0819">tRNA processing</keyword>
<keyword id="KW-0862">Zinc</keyword>
<accession>A8ABB4</accession>
<organism>
    <name type="scientific">Ignicoccus hospitalis (strain KIN4/I / DSM 18386 / JCM 14125)</name>
    <dbReference type="NCBI Taxonomy" id="453591"/>
    <lineage>
        <taxon>Archaea</taxon>
        <taxon>Thermoproteota</taxon>
        <taxon>Thermoprotei</taxon>
        <taxon>Desulfurococcales</taxon>
        <taxon>Desulfurococcaceae</taxon>
        <taxon>Ignicoccus</taxon>
    </lineage>
</organism>
<name>RNZ_IGNH4</name>
<gene>
    <name evidence="1" type="primary">rnz</name>
    <name type="ordered locus">Igni_1037</name>
</gene>
<evidence type="ECO:0000255" key="1">
    <source>
        <dbReference type="HAMAP-Rule" id="MF_01818"/>
    </source>
</evidence>
<proteinExistence type="inferred from homology"/>
<dbReference type="EC" id="3.1.26.11" evidence="1"/>
<dbReference type="EMBL" id="CP000816">
    <property type="protein sequence ID" value="ABU82216.1"/>
    <property type="molecule type" value="Genomic_DNA"/>
</dbReference>
<dbReference type="RefSeq" id="WP_012123180.1">
    <property type="nucleotide sequence ID" value="NC_009776.1"/>
</dbReference>
<dbReference type="SMR" id="A8ABB4"/>
<dbReference type="STRING" id="453591.Igni_1037"/>
<dbReference type="GeneID" id="5562748"/>
<dbReference type="KEGG" id="iho:Igni_1037"/>
<dbReference type="eggNOG" id="arCOG00501">
    <property type="taxonomic scope" value="Archaea"/>
</dbReference>
<dbReference type="HOGENOM" id="CLU_031317_2_1_2"/>
<dbReference type="OrthoDB" id="85118at2157"/>
<dbReference type="PhylomeDB" id="A8ABB4"/>
<dbReference type="Proteomes" id="UP000000262">
    <property type="component" value="Chromosome"/>
</dbReference>
<dbReference type="GO" id="GO:0042781">
    <property type="term" value="F:3'-tRNA processing endoribonuclease activity"/>
    <property type="evidence" value="ECO:0007669"/>
    <property type="project" value="UniProtKB-UniRule"/>
</dbReference>
<dbReference type="GO" id="GO:0008270">
    <property type="term" value="F:zinc ion binding"/>
    <property type="evidence" value="ECO:0007669"/>
    <property type="project" value="UniProtKB-UniRule"/>
</dbReference>
<dbReference type="CDD" id="cd07717">
    <property type="entry name" value="RNaseZ_ZiPD-like_MBL-fold"/>
    <property type="match status" value="1"/>
</dbReference>
<dbReference type="Gene3D" id="3.60.15.10">
    <property type="entry name" value="Ribonuclease Z/Hydroxyacylglutathione hydrolase-like"/>
    <property type="match status" value="1"/>
</dbReference>
<dbReference type="HAMAP" id="MF_01818">
    <property type="entry name" value="RNase_Z_BN"/>
    <property type="match status" value="1"/>
</dbReference>
<dbReference type="InterPro" id="IPR001279">
    <property type="entry name" value="Metallo-B-lactamas"/>
</dbReference>
<dbReference type="InterPro" id="IPR036866">
    <property type="entry name" value="RibonucZ/Hydroxyglut_hydro"/>
</dbReference>
<dbReference type="InterPro" id="IPR013471">
    <property type="entry name" value="RNase_Z/BN"/>
</dbReference>
<dbReference type="NCBIfam" id="NF000801">
    <property type="entry name" value="PRK00055.1-3"/>
    <property type="match status" value="1"/>
</dbReference>
<dbReference type="NCBIfam" id="TIGR02651">
    <property type="entry name" value="RNase_Z"/>
    <property type="match status" value="1"/>
</dbReference>
<dbReference type="PANTHER" id="PTHR46018">
    <property type="entry name" value="ZINC PHOSPHODIESTERASE ELAC PROTEIN 1"/>
    <property type="match status" value="1"/>
</dbReference>
<dbReference type="PANTHER" id="PTHR46018:SF2">
    <property type="entry name" value="ZINC PHOSPHODIESTERASE ELAC PROTEIN 1"/>
    <property type="match status" value="1"/>
</dbReference>
<dbReference type="Pfam" id="PF12706">
    <property type="entry name" value="Lactamase_B_2"/>
    <property type="match status" value="2"/>
</dbReference>
<dbReference type="SUPFAM" id="SSF56281">
    <property type="entry name" value="Metallo-hydrolase/oxidoreductase"/>
    <property type="match status" value="1"/>
</dbReference>
<reference key="1">
    <citation type="journal article" date="2008" name="Genome Biol.">
        <title>A genomic analysis of the archaeal system Ignicoccus hospitalis-Nanoarchaeum equitans.</title>
        <authorList>
            <person name="Podar M."/>
            <person name="Anderson I."/>
            <person name="Makarova K.S."/>
            <person name="Elkins J.G."/>
            <person name="Ivanova N."/>
            <person name="Wall M.A."/>
            <person name="Lykidis A."/>
            <person name="Mavromatis K."/>
            <person name="Sun H."/>
            <person name="Hudson M.E."/>
            <person name="Chen W."/>
            <person name="Deciu C."/>
            <person name="Hutchison D."/>
            <person name="Eads J.R."/>
            <person name="Anderson A."/>
            <person name="Fernandes F."/>
            <person name="Szeto E."/>
            <person name="Lapidus A."/>
            <person name="Kyrpides N.C."/>
            <person name="Saier M.H. Jr."/>
            <person name="Richardson P.M."/>
            <person name="Rachel R."/>
            <person name="Huber H."/>
            <person name="Eisen J.A."/>
            <person name="Koonin E.V."/>
            <person name="Keller M."/>
            <person name="Stetter K.O."/>
        </authorList>
    </citation>
    <scope>NUCLEOTIDE SEQUENCE [LARGE SCALE GENOMIC DNA]</scope>
    <source>
        <strain>KIN4/I / DSM 18386 / JCM 14125</strain>
    </source>
</reference>
<comment type="function">
    <text evidence="1">Zinc phosphodiesterase, which displays some tRNA 3'-processing endonuclease activity. Probably involved in tRNA maturation, by removing a 3'-trailer from precursor tRNA.</text>
</comment>
<comment type="catalytic activity">
    <reaction evidence="1">
        <text>Endonucleolytic cleavage of RNA, removing extra 3' nucleotides from tRNA precursor, generating 3' termini of tRNAs. A 3'-hydroxy group is left at the tRNA terminus and a 5'-phosphoryl group is left at the trailer molecule.</text>
        <dbReference type="EC" id="3.1.26.11"/>
    </reaction>
</comment>
<comment type="cofactor">
    <cofactor evidence="1">
        <name>Zn(2+)</name>
        <dbReference type="ChEBI" id="CHEBI:29105"/>
    </cofactor>
    <text evidence="1">Binds 2 Zn(2+) ions.</text>
</comment>
<comment type="subunit">
    <text evidence="1">Homodimer.</text>
</comment>
<comment type="similarity">
    <text evidence="1">Belongs to the RNase Z family.</text>
</comment>
<sequence length="300" mass="33801">MKRARFVVLGSGAASPAPERALPAHYFEYEGVGALLDCGEGTQFQLMKAKISFSRIKVVFVSHLHGDHVLGLPGLLQTMAMASRRDELLVIGPKGLKDFLLSSFELTYFYPPYPIKVVEVLRDAEITYRNLKLKVFPVNHTVPAFGVSVETASKRKVRADVLEREGLPKRLWGRLQRGEDVVWEGRVFKYEDFTFEGERIKVVYSGDTAPCERLVEEAEGADLLVHEATFTKELKEEAHDRGHSTAEDAATAAARAGVKQLLMVHFSARYKDLRRHLEEARRVFPRSYAAEDLTKVVILK</sequence>
<protein>
    <recommendedName>
        <fullName evidence="1">Ribonuclease Z</fullName>
        <shortName evidence="1">RNase Z</shortName>
        <ecNumber evidence="1">3.1.26.11</ecNumber>
    </recommendedName>
    <alternativeName>
        <fullName evidence="1">tRNA 3 endonuclease</fullName>
    </alternativeName>
    <alternativeName>
        <fullName evidence="1">tRNase Z</fullName>
    </alternativeName>
</protein>